<comment type="subunit">
    <text evidence="1">May form a heterooligomeric complex that consists of seven subunits: mnhA2, mnhB2, mnhC2, mnhD2, mnhE2, mnhF2 and mnhG2.</text>
</comment>
<comment type="subcellular location">
    <subcellularLocation>
        <location evidence="3">Cell membrane</location>
        <topology evidence="3">Multi-pass membrane protein</topology>
    </subcellularLocation>
</comment>
<comment type="similarity">
    <text evidence="3">Belongs to the CPA3 antiporters (TC 2.A.63) subunit B family.</text>
</comment>
<keyword id="KW-0050">Antiport</keyword>
<keyword id="KW-1003">Cell membrane</keyword>
<keyword id="KW-0406">Ion transport</keyword>
<keyword id="KW-0472">Membrane</keyword>
<keyword id="KW-0812">Transmembrane</keyword>
<keyword id="KW-1133">Transmembrane helix</keyword>
<keyword id="KW-0813">Transport</keyword>
<evidence type="ECO:0000250" key="1"/>
<evidence type="ECO:0000255" key="2"/>
<evidence type="ECO:0000305" key="3"/>
<sequence length="141" mass="15455">MKENDVVLRTVTKLVVFILLTFGFYVFFAGHNNPGGGFIGGLIFSSAFILMFLAFNVEEVLESLPIDFRILMIIGALVSSITAIIPMFFGKPFLSQYETTWILPILGQIHVSTITLFELGILFSVVGVIVTVMLSLSGGRS</sequence>
<dbReference type="EMBL" id="CP000255">
    <property type="protein sequence ID" value="ABD20484.1"/>
    <property type="molecule type" value="Genomic_DNA"/>
</dbReference>
<dbReference type="RefSeq" id="WP_000661906.1">
    <property type="nucleotide sequence ID" value="NZ_CP027476.1"/>
</dbReference>
<dbReference type="SMR" id="Q2FJ14"/>
<dbReference type="KEGG" id="saa:SAUSA300_0611"/>
<dbReference type="HOGENOM" id="CLU_101659_1_1_9"/>
<dbReference type="OMA" id="FHGDYGP"/>
<dbReference type="Proteomes" id="UP000001939">
    <property type="component" value="Chromosome"/>
</dbReference>
<dbReference type="GO" id="GO:0005886">
    <property type="term" value="C:plasma membrane"/>
    <property type="evidence" value="ECO:0007669"/>
    <property type="project" value="UniProtKB-SubCell"/>
</dbReference>
<dbReference type="GO" id="GO:0015297">
    <property type="term" value="F:antiporter activity"/>
    <property type="evidence" value="ECO:0007669"/>
    <property type="project" value="UniProtKB-KW"/>
</dbReference>
<dbReference type="GO" id="GO:0006811">
    <property type="term" value="P:monoatomic ion transport"/>
    <property type="evidence" value="ECO:0007669"/>
    <property type="project" value="UniProtKB-KW"/>
</dbReference>
<dbReference type="InterPro" id="IPR050622">
    <property type="entry name" value="CPA3_antiporter_subunitB"/>
</dbReference>
<dbReference type="InterPro" id="IPR007182">
    <property type="entry name" value="MnhB"/>
</dbReference>
<dbReference type="NCBIfam" id="NF009223">
    <property type="entry name" value="PRK12573.1"/>
    <property type="match status" value="1"/>
</dbReference>
<dbReference type="NCBIfam" id="NF009224">
    <property type="entry name" value="PRK12574.1"/>
    <property type="match status" value="1"/>
</dbReference>
<dbReference type="PANTHER" id="PTHR33932">
    <property type="entry name" value="NA(+)/H(+) ANTIPORTER SUBUNIT B"/>
    <property type="match status" value="1"/>
</dbReference>
<dbReference type="PANTHER" id="PTHR33932:SF4">
    <property type="entry name" value="NA(+)_H(+) ANTIPORTER SUBUNIT B"/>
    <property type="match status" value="1"/>
</dbReference>
<dbReference type="Pfam" id="PF04039">
    <property type="entry name" value="MnhB"/>
    <property type="match status" value="1"/>
</dbReference>
<protein>
    <recommendedName>
        <fullName>Putative antiporter subunit mnhB2</fullName>
    </recommendedName>
    <alternativeName>
        <fullName>Mrp complex subunit B2</fullName>
    </alternativeName>
    <alternativeName>
        <fullName>Putative NADH-ubiquinone oxidoreductase subunit mnhB2</fullName>
    </alternativeName>
</protein>
<proteinExistence type="inferred from homology"/>
<feature type="chain" id="PRO_0000372280" description="Putative antiporter subunit mnhB2">
    <location>
        <begin position="1"/>
        <end position="141"/>
    </location>
</feature>
<feature type="transmembrane region" description="Helical" evidence="2">
    <location>
        <begin position="10"/>
        <end position="30"/>
    </location>
</feature>
<feature type="transmembrane region" description="Helical" evidence="2">
    <location>
        <begin position="35"/>
        <end position="55"/>
    </location>
</feature>
<feature type="transmembrane region" description="Helical" evidence="2">
    <location>
        <begin position="70"/>
        <end position="90"/>
    </location>
</feature>
<feature type="transmembrane region" description="Helical" evidence="2">
    <location>
        <begin position="114"/>
        <end position="134"/>
    </location>
</feature>
<gene>
    <name type="primary">mnhB2</name>
    <name type="synonym">mrpB2</name>
    <name type="ordered locus">SAUSA300_0611</name>
</gene>
<name>MNHB2_STAA3</name>
<accession>Q2FJ14</accession>
<organism>
    <name type="scientific">Staphylococcus aureus (strain USA300)</name>
    <dbReference type="NCBI Taxonomy" id="367830"/>
    <lineage>
        <taxon>Bacteria</taxon>
        <taxon>Bacillati</taxon>
        <taxon>Bacillota</taxon>
        <taxon>Bacilli</taxon>
        <taxon>Bacillales</taxon>
        <taxon>Staphylococcaceae</taxon>
        <taxon>Staphylococcus</taxon>
    </lineage>
</organism>
<reference key="1">
    <citation type="journal article" date="2006" name="Lancet">
        <title>Complete genome sequence of USA300, an epidemic clone of community-acquired meticillin-resistant Staphylococcus aureus.</title>
        <authorList>
            <person name="Diep B.A."/>
            <person name="Gill S.R."/>
            <person name="Chang R.F."/>
            <person name="Phan T.H."/>
            <person name="Chen J.H."/>
            <person name="Davidson M.G."/>
            <person name="Lin F."/>
            <person name="Lin J."/>
            <person name="Carleton H.A."/>
            <person name="Mongodin E.F."/>
            <person name="Sensabaugh G.F."/>
            <person name="Perdreau-Remington F."/>
        </authorList>
    </citation>
    <scope>NUCLEOTIDE SEQUENCE [LARGE SCALE GENOMIC DNA]</scope>
    <source>
        <strain>USA300</strain>
    </source>
</reference>